<reference key="1">
    <citation type="submission" date="2006-10" db="EMBL/GenBank/DDBJ databases">
        <authorList>
            <consortium name="NIH - Xenopus Gene Collection (XGC) project"/>
        </authorList>
    </citation>
    <scope>NUCLEOTIDE SEQUENCE [LARGE SCALE MRNA]</scope>
    <source>
        <tissue>Testis</tissue>
    </source>
</reference>
<keyword id="KW-0963">Cytoplasm</keyword>
<keyword id="KW-0479">Metal-binding</keyword>
<keyword id="KW-1185">Reference proteome</keyword>
<keyword id="KW-0677">Repeat</keyword>
<keyword id="KW-0808">Transferase</keyword>
<keyword id="KW-0833">Ubl conjugation pathway</keyword>
<keyword id="KW-0862">Zinc</keyword>
<keyword id="KW-0863">Zinc-finger</keyword>
<sequence length="1696" mass="191061">MQEFGFMCKEREMETVRGVLPYWPRIYCKISLDLDRRVREATQQAFEQLILKVKKYLAPHLKSLMGFWLIAQCDTYSPAASSARVAFEAAFPAHKQPEALAFCKEEIMNVLLDHLLKETPDTLSDTQAVPIEDRESKYFRVVTCSLLALKRLLCMLPRSENSSLQERLAHLLSQSKFWKYSKHSTSSIRSAFFELMSALCQCSPDVLRAEASRLCPAVLLSIDDSDAVVCPALWEAVLYTITTIEDCWEHVNAQKGVLPKLWSVLREGGRGLATVIFPNLLPFISRVPTNIIKTPTDFYSNFFNSLGQGLSSERAVASPAECSAIISAYMECLRFAMQENAGEEEENKKVQQILISDQLMPLIDSSLKDPKLQNSPLFSQVEETLYSWEKKAESQGLDDKLSRIHATLLREFWENLAHICVSHVDVIEAGEKNLAGVSGLLQVLQNPNCLLKVNKKKKAKIRFKGEGDDESDAVSHVSESQPMSKFIMETCSSSGRDPGIAQLRQERLEDLVCKLAELSMVYISEQRSQQHLMFLAALLSTFPSIRVFQVLLQQSSEEDPKNLNSPDHDVTPRHKNPAVQFLYAKLIFWFNDKSLEESDFLVDILYSVLFCCTDSSERKHLLDDMTKMNFKWSVFLYIIQKACTDPEKYSLASDWLKGEVLGERLICLANDLCTSGLMDKATPSEAYCSKKWALLSLVLSEHVHNEYLIADAYVEKIINKLHSALMKARNLSKAGHLEQSVSFICDVGSNFFSSIKGCLQMPSAEDLLLTIFQLCAQASDTSHMSESLLLKLKNTWLAGLHSLVCQYKNMPQGSNFLKQSAQWVKDQIQTSHLNVKSLQSLICTVDDLYSTILDSSLSGFSLLAEHTASMMPSAETWQKMRHALSSQWLSKPLLEGRLSMNTETSGTDLKSFPKTWLPSHLCTASLLSKMALRLLEKEKSLKEEEIGVKINITVAEMLYSLQWCEELEKPPTLIGECCEMLCSLGVSHEKVMDLSVHLPGLLELLYNRSKEDGSLWSLTANRFIHKRGAGPSELLPLTEDTEKYFPVTLGSLHTIQSLSAFLCPELKEELVIQCTARLMTCSASAVSCTDGGFGYLAIINSCLGSDSDLCQEILPGVLKVMLSWKDDQEDIFLFSSNVQDSSQSLIGLNVEMIRFLSILLKYLASSVSSLVDVDWDFIMCSMLAWLESACESSAAYHIPLVRLFACASCDLATEISHYFESVATSTTMSLPANLMSEWKEFFSEGIYSLMLPMLVRIAEEYKASETSHMSHVLKSLGRTLGYISKEQLLNHKLPAKFVAGQKTNLTDSLQSLLNTLAPLLLYRERSVQITVYHLLDKIMADLPGFDDEDLKSYGDEDEEPALSPPAALMSVLAIQEDLVESILKEIPVGEFAVIEPLKEEFCFVLGYLLTWKLILTFFKAASSQLRALYSQYLRKTKSLNKLLYNLFKLMPHNPVLPGQASDMPSKEPKTFFTEELQLAVKGTATVQQEVPHLACCVYHMTLKDLPAMVRLWWNGCEKRIFNVVDRFTTKYVSSVLSSQEISSVQLSTQVFDGMTVKARSTTREVIATYSVDDICIELIIQLPQNYPLGSITVESGRRVGVAVQQWRNWMLQLNTYLTHQNGSIMEGLALWKNNVDKRFEGVEDCMICFSVIHGSNYSLPKKACRTCKKKFHSECLYKWFTSSNKSTCPLCRETFF</sequence>
<gene>
    <name type="primary">ltn1</name>
    <name type="synonym">rnf160</name>
</gene>
<comment type="function">
    <text evidence="1 2">E3 ubiquitin-protein ligase component of the ribosome quality control complex (RQC), a ribosome-associated complex that mediates ubiquitination and extraction of incompletely synthesized nascent chains for proteasomal degradation. Within the RQC complex, LTN1 is recruited to stalled 60S ribosomal subunits by NEMF and mediates ubiquitination of stalled nascent chains (By similarity). Ubiquitination leads to VCP/p97 recruitment for extraction and degradation of the incomplete translation product (By similarity).</text>
</comment>
<comment type="catalytic activity">
    <reaction evidence="1">
        <text>S-ubiquitinyl-[E2 ubiquitin-conjugating enzyme]-L-cysteine + [acceptor protein]-L-lysine = [E2 ubiquitin-conjugating enzyme]-L-cysteine + N(6)-ubiquitinyl-[acceptor protein]-L-lysine.</text>
        <dbReference type="EC" id="2.3.2.27"/>
    </reaction>
</comment>
<comment type="pathway">
    <text evidence="1">Protein modification; protein ubiquitination.</text>
</comment>
<comment type="subunit">
    <text evidence="1 2">Component of the ribosome quality control complex (RQC), composed of at least the E3 ubiquitin ligase LTN1 and NEMF associated with the 60S ribosomal subunit. The complex probably also contains TCF25 as well as VCP/p97 and its ubiquitin-binding cofactors.</text>
</comment>
<comment type="subcellular location">
    <subcellularLocation>
        <location evidence="1">Cytoplasm</location>
        <location evidence="1">Cytosol</location>
    </subcellularLocation>
</comment>
<comment type="similarity">
    <text evidence="5">Belongs to the LTN1 family.</text>
</comment>
<organism>
    <name type="scientific">Xenopus tropicalis</name>
    <name type="common">Western clawed frog</name>
    <name type="synonym">Silurana tropicalis</name>
    <dbReference type="NCBI Taxonomy" id="8364"/>
    <lineage>
        <taxon>Eukaryota</taxon>
        <taxon>Metazoa</taxon>
        <taxon>Chordata</taxon>
        <taxon>Craniata</taxon>
        <taxon>Vertebrata</taxon>
        <taxon>Euteleostomi</taxon>
        <taxon>Amphibia</taxon>
        <taxon>Batrachia</taxon>
        <taxon>Anura</taxon>
        <taxon>Pipoidea</taxon>
        <taxon>Pipidae</taxon>
        <taxon>Xenopodinae</taxon>
        <taxon>Xenopus</taxon>
        <taxon>Silurana</taxon>
    </lineage>
</organism>
<feature type="chain" id="PRO_0000404569" description="E3 ubiquitin-protein ligase listerin">
    <location>
        <begin position="1"/>
        <end position="1696"/>
    </location>
</feature>
<feature type="repeat" description="HEAT 1" evidence="3">
    <location>
        <begin position="17"/>
        <end position="55"/>
    </location>
</feature>
<feature type="repeat" description="HEAT 2" evidence="3">
    <location>
        <begin position="102"/>
        <end position="140"/>
    </location>
</feature>
<feature type="repeat" description="HEAT 3" evidence="3">
    <location>
        <begin position="144"/>
        <end position="181"/>
    </location>
</feature>
<feature type="repeat" description="HEAT 4" evidence="3">
    <location>
        <begin position="209"/>
        <end position="250"/>
    </location>
</feature>
<feature type="repeat" description="HEAT 5" evidence="3">
    <location>
        <begin position="252"/>
        <end position="289"/>
    </location>
</feature>
<feature type="repeat" description="HEAT 6" evidence="3">
    <location>
        <begin position="354"/>
        <end position="394"/>
    </location>
</feature>
<feature type="repeat" description="HEAT 7" evidence="3">
    <location>
        <begin position="431"/>
        <end position="468"/>
    </location>
</feature>
<feature type="repeat" description="HEAT 8" evidence="3">
    <location>
        <begin position="542"/>
        <end position="580"/>
    </location>
</feature>
<feature type="repeat" description="HEAT 9" evidence="3">
    <location>
        <begin position="596"/>
        <end position="634"/>
    </location>
</feature>
<feature type="repeat" description="HEAT 10" evidence="3">
    <location>
        <begin position="921"/>
        <end position="958"/>
    </location>
</feature>
<feature type="repeat" description="HEAT 11" evidence="3">
    <location>
        <begin position="992"/>
        <end position="1029"/>
    </location>
</feature>
<feature type="repeat" description="HEAT 12" evidence="3">
    <location>
        <begin position="1108"/>
        <end position="1148"/>
    </location>
</feature>
<feature type="repeat" description="HEAT 13" evidence="3">
    <location>
        <begin position="1150"/>
        <end position="1188"/>
    </location>
</feature>
<feature type="repeat" description="HEAT 14" evidence="3">
    <location>
        <begin position="1245"/>
        <end position="1282"/>
    </location>
</feature>
<feature type="repeat" description="HEAT 15" evidence="3">
    <location>
        <begin position="1307"/>
        <end position="1344"/>
    </location>
</feature>
<feature type="repeat" description="HEAT 16" evidence="3">
    <location>
        <begin position="1371"/>
        <end position="1405"/>
    </location>
</feature>
<feature type="repeat" description="HEAT 17" evidence="3">
    <location>
        <begin position="1406"/>
        <end position="1442"/>
    </location>
</feature>
<feature type="zinc finger region" description="RING-type" evidence="4">
    <location>
        <begin position="1645"/>
        <end position="1692"/>
    </location>
</feature>
<proteinExistence type="evidence at transcript level"/>
<evidence type="ECO:0000250" key="1">
    <source>
        <dbReference type="UniProtKB" id="O94822"/>
    </source>
</evidence>
<evidence type="ECO:0000250" key="2">
    <source>
        <dbReference type="UniProtKB" id="Q04781"/>
    </source>
</evidence>
<evidence type="ECO:0000255" key="3"/>
<evidence type="ECO:0000255" key="4">
    <source>
        <dbReference type="PROSITE-ProRule" id="PRU00175"/>
    </source>
</evidence>
<evidence type="ECO:0000305" key="5"/>
<accession>A0JM49</accession>
<dbReference type="EC" id="2.3.2.27" evidence="1"/>
<dbReference type="EMBL" id="BC125737">
    <property type="protein sequence ID" value="AAI25738.1"/>
    <property type="molecule type" value="mRNA"/>
</dbReference>
<dbReference type="RefSeq" id="NP_001072745.1">
    <property type="nucleotide sequence ID" value="NM_001079277.1"/>
</dbReference>
<dbReference type="SMR" id="A0JM49"/>
<dbReference type="FunCoup" id="A0JM49">
    <property type="interactions" value="3123"/>
</dbReference>
<dbReference type="STRING" id="8364.ENSXETP00000033980"/>
<dbReference type="PaxDb" id="8364-ENSXETP00000060508"/>
<dbReference type="GeneID" id="780202"/>
<dbReference type="KEGG" id="xtr:780202"/>
<dbReference type="AGR" id="Xenbase:XB-GENE-1217544"/>
<dbReference type="CTD" id="26046"/>
<dbReference type="Xenbase" id="XB-GENE-1217544">
    <property type="gene designation" value="ltn1"/>
</dbReference>
<dbReference type="eggNOG" id="KOG0803">
    <property type="taxonomic scope" value="Eukaryota"/>
</dbReference>
<dbReference type="InParanoid" id="A0JM49"/>
<dbReference type="OrthoDB" id="6108at2759"/>
<dbReference type="UniPathway" id="UPA00143"/>
<dbReference type="Proteomes" id="UP000008143">
    <property type="component" value="Chromosome 2"/>
</dbReference>
<dbReference type="GO" id="GO:0005829">
    <property type="term" value="C:cytosol"/>
    <property type="evidence" value="ECO:0000250"/>
    <property type="project" value="UniProtKB"/>
</dbReference>
<dbReference type="GO" id="GO:1990112">
    <property type="term" value="C:RQC complex"/>
    <property type="evidence" value="ECO:0000250"/>
    <property type="project" value="UniProtKB"/>
</dbReference>
<dbReference type="GO" id="GO:0061630">
    <property type="term" value="F:ubiquitin protein ligase activity"/>
    <property type="evidence" value="ECO:0000250"/>
    <property type="project" value="UniProtKB"/>
</dbReference>
<dbReference type="GO" id="GO:0008270">
    <property type="term" value="F:zinc ion binding"/>
    <property type="evidence" value="ECO:0007669"/>
    <property type="project" value="UniProtKB-KW"/>
</dbReference>
<dbReference type="GO" id="GO:0016567">
    <property type="term" value="P:protein ubiquitination"/>
    <property type="evidence" value="ECO:0007669"/>
    <property type="project" value="UniProtKB-UniPathway"/>
</dbReference>
<dbReference type="GO" id="GO:1990116">
    <property type="term" value="P:ribosome-associated ubiquitin-dependent protein catabolic process"/>
    <property type="evidence" value="ECO:0000250"/>
    <property type="project" value="UniProtKB"/>
</dbReference>
<dbReference type="CDD" id="cd16491">
    <property type="entry name" value="RING-CH-C4HC3_LTN1"/>
    <property type="match status" value="1"/>
</dbReference>
<dbReference type="FunFam" id="3.30.40.10:FF:000038">
    <property type="entry name" value="E3 ubiquitin-protein ligase listerin"/>
    <property type="match status" value="1"/>
</dbReference>
<dbReference type="FunFam" id="1.25.10.10:FF:001251">
    <property type="entry name" value="Predicted protein"/>
    <property type="match status" value="1"/>
</dbReference>
<dbReference type="Gene3D" id="3.30.40.10">
    <property type="entry name" value="Zinc/RING finger domain, C3HC4 (zinc finger)"/>
    <property type="match status" value="1"/>
</dbReference>
<dbReference type="InterPro" id="IPR016024">
    <property type="entry name" value="ARM-type_fold"/>
</dbReference>
<dbReference type="InterPro" id="IPR039795">
    <property type="entry name" value="LTN1/Rkr1"/>
</dbReference>
<dbReference type="InterPro" id="IPR054477">
    <property type="entry name" value="LTN1_E3_ligase_6th"/>
</dbReference>
<dbReference type="InterPro" id="IPR056241">
    <property type="entry name" value="LTN1_HEAT_5th"/>
</dbReference>
<dbReference type="InterPro" id="IPR054476">
    <property type="entry name" value="Ltn1_N"/>
</dbReference>
<dbReference type="InterPro" id="IPR054478">
    <property type="entry name" value="LTN1_UBC"/>
</dbReference>
<dbReference type="InterPro" id="IPR039804">
    <property type="entry name" value="RING-CH-C4HC3_LTN1"/>
</dbReference>
<dbReference type="InterPro" id="IPR001841">
    <property type="entry name" value="Znf_RING"/>
</dbReference>
<dbReference type="InterPro" id="IPR011016">
    <property type="entry name" value="Znf_RING-CH"/>
</dbReference>
<dbReference type="InterPro" id="IPR013083">
    <property type="entry name" value="Znf_RING/FYVE/PHD"/>
</dbReference>
<dbReference type="PANTHER" id="PTHR12389:SF0">
    <property type="entry name" value="E3 UBIQUITIN-PROTEIN LIGASE LISTERIN"/>
    <property type="match status" value="1"/>
</dbReference>
<dbReference type="PANTHER" id="PTHR12389">
    <property type="entry name" value="ZINC FINGER PROTEIN 294"/>
    <property type="match status" value="1"/>
</dbReference>
<dbReference type="Pfam" id="PF22958">
    <property type="entry name" value="Ltn1_1st"/>
    <property type="match status" value="1"/>
</dbReference>
<dbReference type="Pfam" id="PF24618">
    <property type="entry name" value="LTN1_E3_ligase_5th"/>
    <property type="match status" value="1"/>
</dbReference>
<dbReference type="Pfam" id="PF22999">
    <property type="entry name" value="LTN1_E3_ligase_6th"/>
    <property type="match status" value="1"/>
</dbReference>
<dbReference type="Pfam" id="PF23009">
    <property type="entry name" value="UBC_like"/>
    <property type="match status" value="1"/>
</dbReference>
<dbReference type="Pfam" id="PF13639">
    <property type="entry name" value="zf-RING_2"/>
    <property type="match status" value="1"/>
</dbReference>
<dbReference type="SMART" id="SM00744">
    <property type="entry name" value="RINGv"/>
    <property type="match status" value="1"/>
</dbReference>
<dbReference type="SUPFAM" id="SSF48371">
    <property type="entry name" value="ARM repeat"/>
    <property type="match status" value="1"/>
</dbReference>
<dbReference type="SUPFAM" id="SSF57850">
    <property type="entry name" value="RING/U-box"/>
    <property type="match status" value="1"/>
</dbReference>
<dbReference type="PROSITE" id="PS50089">
    <property type="entry name" value="ZF_RING_2"/>
    <property type="match status" value="1"/>
</dbReference>
<protein>
    <recommendedName>
        <fullName>E3 ubiquitin-protein ligase listerin</fullName>
        <ecNumber evidence="1">2.3.2.27</ecNumber>
    </recommendedName>
    <alternativeName>
        <fullName>RING finger protein 160</fullName>
        <shortName>Zfp-294</shortName>
    </alternativeName>
    <alternativeName>
        <fullName evidence="5">RING-type E3 ubiquitin transferase listerin</fullName>
    </alternativeName>
</protein>
<name>LTN1_XENTR</name>